<name>RORG_PONAB</name>
<accession>Q5RAP4</accession>
<keyword id="KW-0010">Activator</keyword>
<keyword id="KW-0090">Biological rhythms</keyword>
<keyword id="KW-0217">Developmental protein</keyword>
<keyword id="KW-0238">DNA-binding</keyword>
<keyword id="KW-0479">Metal-binding</keyword>
<keyword id="KW-0539">Nucleus</keyword>
<keyword id="KW-0675">Receptor</keyword>
<keyword id="KW-1185">Reference proteome</keyword>
<keyword id="KW-0804">Transcription</keyword>
<keyword id="KW-0805">Transcription regulation</keyword>
<keyword id="KW-0862">Zinc</keyword>
<keyword id="KW-0863">Zinc-finger</keyword>
<feature type="chain" id="PRO_0000273575" description="Nuclear receptor ROR-gamma">
    <location>
        <begin position="1"/>
        <end position="518"/>
    </location>
</feature>
<feature type="domain" description="NR LBD" evidence="5">
    <location>
        <begin position="269"/>
        <end position="508"/>
    </location>
</feature>
<feature type="DNA-binding region" description="Nuclear receptor" evidence="4">
    <location>
        <begin position="31"/>
        <end position="96"/>
    </location>
</feature>
<feature type="zinc finger region" description="NR C4-type" evidence="4">
    <location>
        <begin position="31"/>
        <end position="51"/>
    </location>
</feature>
<feature type="zinc finger region" description="NR C4-type" evidence="4">
    <location>
        <begin position="67"/>
        <end position="91"/>
    </location>
</feature>
<feature type="region of interest" description="Modulating" evidence="3">
    <location>
        <begin position="1"/>
        <end position="30"/>
    </location>
</feature>
<feature type="region of interest" description="Disordered" evidence="6">
    <location>
        <begin position="105"/>
        <end position="183"/>
    </location>
</feature>
<feature type="region of interest" description="Disordered" evidence="6">
    <location>
        <begin position="238"/>
        <end position="258"/>
    </location>
</feature>
<feature type="short sequence motif" description="AF-2">
    <location>
        <begin position="501"/>
        <end position="506"/>
    </location>
</feature>
<feature type="compositionally biased region" description="Basic and acidic residues" evidence="6">
    <location>
        <begin position="109"/>
        <end position="118"/>
    </location>
</feature>
<feature type="compositionally biased region" description="Low complexity" evidence="6">
    <location>
        <begin position="119"/>
        <end position="130"/>
    </location>
</feature>
<evidence type="ECO:0000250" key="1">
    <source>
        <dbReference type="UniProtKB" id="P51449"/>
    </source>
</evidence>
<evidence type="ECO:0000250" key="2">
    <source>
        <dbReference type="UniProtKB" id="P51450"/>
    </source>
</evidence>
<evidence type="ECO:0000255" key="3"/>
<evidence type="ECO:0000255" key="4">
    <source>
        <dbReference type="PROSITE-ProRule" id="PRU00407"/>
    </source>
</evidence>
<evidence type="ECO:0000255" key="5">
    <source>
        <dbReference type="PROSITE-ProRule" id="PRU01189"/>
    </source>
</evidence>
<evidence type="ECO:0000256" key="6">
    <source>
        <dbReference type="SAM" id="MobiDB-lite"/>
    </source>
</evidence>
<evidence type="ECO:0000305" key="7"/>
<dbReference type="EMBL" id="CR858971">
    <property type="protein sequence ID" value="CAH91166.1"/>
    <property type="molecule type" value="mRNA"/>
</dbReference>
<dbReference type="RefSeq" id="NP_001125682.1">
    <property type="nucleotide sequence ID" value="NM_001132210.1"/>
</dbReference>
<dbReference type="SMR" id="Q5RAP4"/>
<dbReference type="STRING" id="9601.ENSPPYP00000000995"/>
<dbReference type="GeneID" id="100172603"/>
<dbReference type="KEGG" id="pon:100172603"/>
<dbReference type="CTD" id="6097"/>
<dbReference type="eggNOG" id="KOG4216">
    <property type="taxonomic scope" value="Eukaryota"/>
</dbReference>
<dbReference type="InParanoid" id="Q5RAP4"/>
<dbReference type="OrthoDB" id="5771769at2759"/>
<dbReference type="Proteomes" id="UP000001595">
    <property type="component" value="Unplaced"/>
</dbReference>
<dbReference type="GO" id="GO:0005654">
    <property type="term" value="C:nucleoplasm"/>
    <property type="evidence" value="ECO:0007669"/>
    <property type="project" value="UniProtKB-ARBA"/>
</dbReference>
<dbReference type="GO" id="GO:0005634">
    <property type="term" value="C:nucleus"/>
    <property type="evidence" value="ECO:0000250"/>
    <property type="project" value="UniProtKB"/>
</dbReference>
<dbReference type="GO" id="GO:0003700">
    <property type="term" value="F:DNA-binding transcription factor activity"/>
    <property type="evidence" value="ECO:0000250"/>
    <property type="project" value="UniProtKB"/>
</dbReference>
<dbReference type="GO" id="GO:0004879">
    <property type="term" value="F:nuclear receptor activity"/>
    <property type="evidence" value="ECO:0007669"/>
    <property type="project" value="InterPro"/>
</dbReference>
<dbReference type="GO" id="GO:0008142">
    <property type="term" value="F:oxysterol binding"/>
    <property type="evidence" value="ECO:0007669"/>
    <property type="project" value="TreeGrafter"/>
</dbReference>
<dbReference type="GO" id="GO:0000978">
    <property type="term" value="F:RNA polymerase II cis-regulatory region sequence-specific DNA binding"/>
    <property type="evidence" value="ECO:0007669"/>
    <property type="project" value="TreeGrafter"/>
</dbReference>
<dbReference type="GO" id="GO:0008270">
    <property type="term" value="F:zinc ion binding"/>
    <property type="evidence" value="ECO:0007669"/>
    <property type="project" value="UniProtKB-KW"/>
</dbReference>
<dbReference type="GO" id="GO:0060612">
    <property type="term" value="P:adipose tissue development"/>
    <property type="evidence" value="ECO:0000250"/>
    <property type="project" value="UniProtKB"/>
</dbReference>
<dbReference type="GO" id="GO:0032922">
    <property type="term" value="P:circadian regulation of gene expression"/>
    <property type="evidence" value="ECO:0000250"/>
    <property type="project" value="UniProtKB"/>
</dbReference>
<dbReference type="GO" id="GO:0048535">
    <property type="term" value="P:lymph node development"/>
    <property type="evidence" value="ECO:0000250"/>
    <property type="project" value="UniProtKB"/>
</dbReference>
<dbReference type="GO" id="GO:0048541">
    <property type="term" value="P:Peyer's patch development"/>
    <property type="evidence" value="ECO:0000250"/>
    <property type="project" value="UniProtKB"/>
</dbReference>
<dbReference type="GO" id="GO:0042753">
    <property type="term" value="P:positive regulation of circadian rhythm"/>
    <property type="evidence" value="ECO:0000250"/>
    <property type="project" value="UniProtKB"/>
</dbReference>
<dbReference type="GO" id="GO:0045893">
    <property type="term" value="P:positive regulation of DNA-templated transcription"/>
    <property type="evidence" value="ECO:0000250"/>
    <property type="project" value="UniProtKB"/>
</dbReference>
<dbReference type="GO" id="GO:0045598">
    <property type="term" value="P:regulation of fat cell differentiation"/>
    <property type="evidence" value="ECO:0000250"/>
    <property type="project" value="UniProtKB"/>
</dbReference>
<dbReference type="GO" id="GO:0010906">
    <property type="term" value="P:regulation of glucose metabolic process"/>
    <property type="evidence" value="ECO:0000250"/>
    <property type="project" value="UniProtKB"/>
</dbReference>
<dbReference type="GO" id="GO:0019218">
    <property type="term" value="P:regulation of steroid metabolic process"/>
    <property type="evidence" value="ECO:0000250"/>
    <property type="project" value="UniProtKB"/>
</dbReference>
<dbReference type="GO" id="GO:0072539">
    <property type="term" value="P:T-helper 17 cell differentiation"/>
    <property type="evidence" value="ECO:0000250"/>
    <property type="project" value="UniProtKB"/>
</dbReference>
<dbReference type="GO" id="GO:0042093">
    <property type="term" value="P:T-helper cell differentiation"/>
    <property type="evidence" value="ECO:0000250"/>
    <property type="project" value="UniProtKB"/>
</dbReference>
<dbReference type="GO" id="GO:0006805">
    <property type="term" value="P:xenobiotic metabolic process"/>
    <property type="evidence" value="ECO:0000250"/>
    <property type="project" value="UniProtKB"/>
</dbReference>
<dbReference type="CDD" id="cd06968">
    <property type="entry name" value="NR_DBD_ROR"/>
    <property type="match status" value="1"/>
</dbReference>
<dbReference type="CDD" id="cd06939">
    <property type="entry name" value="NR_LBD_ROR_like"/>
    <property type="match status" value="1"/>
</dbReference>
<dbReference type="FunFam" id="1.10.565.10:FF:000005">
    <property type="entry name" value="Nuclear orphan receptor ROR-beta"/>
    <property type="match status" value="1"/>
</dbReference>
<dbReference type="FunFam" id="3.30.50.10:FF:000003">
    <property type="entry name" value="Nuclear orphan receptor ROR-beta"/>
    <property type="match status" value="1"/>
</dbReference>
<dbReference type="Gene3D" id="3.30.50.10">
    <property type="entry name" value="Erythroid Transcription Factor GATA-1, subunit A"/>
    <property type="match status" value="1"/>
</dbReference>
<dbReference type="Gene3D" id="1.10.565.10">
    <property type="entry name" value="Retinoid X Receptor"/>
    <property type="match status" value="1"/>
</dbReference>
<dbReference type="InterPro" id="IPR035500">
    <property type="entry name" value="NHR-like_dom_sf"/>
</dbReference>
<dbReference type="InterPro" id="IPR044101">
    <property type="entry name" value="NR_DBD_ROR"/>
</dbReference>
<dbReference type="InterPro" id="IPR000536">
    <property type="entry name" value="Nucl_hrmn_rcpt_lig-bd"/>
</dbReference>
<dbReference type="InterPro" id="IPR001723">
    <property type="entry name" value="Nuclear_hrmn_rcpt"/>
</dbReference>
<dbReference type="InterPro" id="IPR003079">
    <property type="entry name" value="ROR_rcpt"/>
</dbReference>
<dbReference type="InterPro" id="IPR001628">
    <property type="entry name" value="Znf_hrmn_rcpt"/>
</dbReference>
<dbReference type="InterPro" id="IPR013088">
    <property type="entry name" value="Znf_NHR/GATA"/>
</dbReference>
<dbReference type="PANTHER" id="PTHR45805">
    <property type="entry name" value="NUCLEAR HORMONE RECEPTOR HR3-RELATED"/>
    <property type="match status" value="1"/>
</dbReference>
<dbReference type="PANTHER" id="PTHR45805:SF1">
    <property type="entry name" value="NUCLEAR RECEPTOR ROR-GAMMA"/>
    <property type="match status" value="1"/>
</dbReference>
<dbReference type="Pfam" id="PF00104">
    <property type="entry name" value="Hormone_recep"/>
    <property type="match status" value="1"/>
</dbReference>
<dbReference type="Pfam" id="PF00105">
    <property type="entry name" value="zf-C4"/>
    <property type="match status" value="1"/>
</dbReference>
<dbReference type="PRINTS" id="PR01293">
    <property type="entry name" value="RORNUCRECPTR"/>
</dbReference>
<dbReference type="PRINTS" id="PR00398">
    <property type="entry name" value="STRDHORMONER"/>
</dbReference>
<dbReference type="PRINTS" id="PR00047">
    <property type="entry name" value="STROIDFINGER"/>
</dbReference>
<dbReference type="SMART" id="SM00430">
    <property type="entry name" value="HOLI"/>
    <property type="match status" value="1"/>
</dbReference>
<dbReference type="SMART" id="SM00399">
    <property type="entry name" value="ZnF_C4"/>
    <property type="match status" value="1"/>
</dbReference>
<dbReference type="SUPFAM" id="SSF57716">
    <property type="entry name" value="Glucocorticoid receptor-like (DNA-binding domain)"/>
    <property type="match status" value="1"/>
</dbReference>
<dbReference type="SUPFAM" id="SSF48508">
    <property type="entry name" value="Nuclear receptor ligand-binding domain"/>
    <property type="match status" value="1"/>
</dbReference>
<dbReference type="PROSITE" id="PS51843">
    <property type="entry name" value="NR_LBD"/>
    <property type="match status" value="1"/>
</dbReference>
<dbReference type="PROSITE" id="PS00031">
    <property type="entry name" value="NUCLEAR_REC_DBD_1"/>
    <property type="match status" value="1"/>
</dbReference>
<dbReference type="PROSITE" id="PS51030">
    <property type="entry name" value="NUCLEAR_REC_DBD_2"/>
    <property type="match status" value="1"/>
</dbReference>
<organism>
    <name type="scientific">Pongo abelii</name>
    <name type="common">Sumatran orangutan</name>
    <name type="synonym">Pongo pygmaeus abelii</name>
    <dbReference type="NCBI Taxonomy" id="9601"/>
    <lineage>
        <taxon>Eukaryota</taxon>
        <taxon>Metazoa</taxon>
        <taxon>Chordata</taxon>
        <taxon>Craniata</taxon>
        <taxon>Vertebrata</taxon>
        <taxon>Euteleostomi</taxon>
        <taxon>Mammalia</taxon>
        <taxon>Eutheria</taxon>
        <taxon>Euarchontoglires</taxon>
        <taxon>Primates</taxon>
        <taxon>Haplorrhini</taxon>
        <taxon>Catarrhini</taxon>
        <taxon>Hominidae</taxon>
        <taxon>Pongo</taxon>
    </lineage>
</organism>
<sequence length="518" mass="58191">MDRAPQRQHQASRELLAAKKTHTSQIEVIPCKICGDKSSGIHYGVITCEGCKGFFRRSQRCNAAYSCTRQQNCPIDRTSRNRCQHCRLQKCLALGMSRDAVKFGRMSKKQRDSLHAEVQKQLQQRQQQQQEPVVKTPPAGAQGADTLTYTLGLPDGQLPLGSSPDLPEASACPPGLLKASGSGPSYSNNLAKAGLNGASCHLEYSPERGKAEGRESFYSTGSQLTPDRCGLRFEEHRHPGLGELGQGPDSYGSPSFRSTPEAPYASLTEIEHLVQSVCKSYRETCQLRLEDLLRQRSNIFSREEVTGYQRKSMWEMWERCAHHLTEAIQYVVEFAKRLSGFMELCQNDQIVLLKAGAVEVVLVRMCRAYNADNRTVFFEGKYGGMELFRALGCSELISSIFDFSHSLSALHFSEDEIALYTALVLINAYRPGLQEKRKVEQLQYNLELAFHHHLCKTHRQSILAKLPPKGKLRSLCSQHVERLQIFQHLHPIVVQATFPPLYKELFSTETESPVGLSK</sequence>
<comment type="function">
    <text evidence="1 2">Nuclear receptor that binds DNA as a monomer to ROR response elements (RORE) containing a single core motif half-site 5'-AGGTCA-3' preceded by a short A-T-rich sequence. Key regulator of cellular differentiation, immunity, peripheral circadian rhythm as well as lipid, steroid, xenobiotics and glucose metabolism. Considered to have intrinsic transcriptional activity, have some natural ligands like oxysterols that act as agonists (25-hydroxycholesterol) or inverse agonists (7-oxygenated sterols), enhancing or repressing the transcriptional activity, respectively. Recruits distinct combinations of cofactors to target gene regulatory regions to modulate their transcriptional expression, depending on the tissue, time and promoter contexts. Regulates the circadian expression of clock genes such as CRY1, BMAL1 and NR1D1 in peripheral tissues and in a tissue-selective manner. Competes with NR1D1 for binding to their shared DNA response element on some clock genes such as BMAL1, CRY1 and NR1D1 itself, resulting in NR1D1-mediated repression or RORC-mediated activation of the expression, leading to the circadian pattern of clock genes expression. Therefore influences the period length and stability of the clock. Involved in the regulation of the rhythmic expression of genes involved in glucose and lipid metabolism, including PLIN2 and AVPR1A. Negative regulator of adipocyte differentiation through the regulation of early phase genes expression, such as MMP3. Controls adipogenesis as well as adipocyte size and modulates insulin sensitivity in obesity. In liver, has specific and redundant functions with RORA as positive or negative modulator of expression of genes encoding phase I and Phase II proteins involved in the metabolism of lipids, steroids and xenobiotics, such as SULT1E1. Also plays a role in the regulation of hepatocyte glucose metabolism through the regulation of G6PC1 and PCK1. Essential for thymopoiesis and the development of several secondary lymphoid tissues, including lymph nodes and Peyer's patches. Required for the generation of LTi (lymphoid tissue inducer) cells. Regulates thymocyte survival through DNA-binding on ROREs of target gene promoter regions and recruitment of coactivaros via the AF-2. Also plays a key role, downstream of IL6 and TGFB and synergistically with RORA, for lineage specification of uncommitted CD4(+) T-helper (T(H)) cells into T(H)17 cells, antagonizing the T(H)1 program. Probably regulates IL17 and IL17F expression on T(H) by binding to the essential enhancer conserved non-coding sequence 2 (CNS2) in the IL17-IL17F locus. May also play a role in the pre-TCR activation cascade leading to the maturation of alpha/beta T-cells and may participate in the regulation of DNA accessibility in the TCR-J(alpha) locus. Regulates the rhythmic expression of PROX1 and promotes its nuclear localization. Plays an indispensable role in the induction of IFN-gamma dependent anti-mycobacterial systemic immunity (By similarity).</text>
</comment>
<comment type="subunit">
    <text evidence="2">Interacts (via AF-2 motif) with the coactivators NCOA1, NCOA2 and PPARGC1A (via LXXLL motif) (By similarity). Interacts with the corepressor NCOR1 (By similarity). Interacts with CRY1 (By similarity). Interacts (via AF-2 motif) with PROX1 (By similarity). Interacts with FOXP3 (By similarity). Interacts with NR0B2 (By similarity).</text>
</comment>
<comment type="subcellular location">
    <subcellularLocation>
        <location evidence="1 4">Nucleus</location>
    </subcellularLocation>
</comment>
<comment type="domain">
    <text evidence="2">The AF-2 (activation function-2) motif is required for recruiting coregulators containing LXXLL motifs such as NCOA1 and NCOA2.</text>
</comment>
<comment type="similarity">
    <text evidence="7">Belongs to the nuclear hormone receptor family. NR1 subfamily.</text>
</comment>
<gene>
    <name type="primary">RORC</name>
    <name type="synonym">NR1F3</name>
</gene>
<protein>
    <recommendedName>
        <fullName>Nuclear receptor ROR-gamma</fullName>
    </recommendedName>
    <alternativeName>
        <fullName>Nuclear receptor RZR-gamma</fullName>
    </alternativeName>
    <alternativeName>
        <fullName>Nuclear receptor subfamily 1 group F member 3</fullName>
    </alternativeName>
    <alternativeName>
        <fullName>Retinoid-related orphan receptor-gamma</fullName>
    </alternativeName>
</protein>
<reference key="1">
    <citation type="submission" date="2004-11" db="EMBL/GenBank/DDBJ databases">
        <authorList>
            <consortium name="The German cDNA consortium"/>
        </authorList>
    </citation>
    <scope>NUCLEOTIDE SEQUENCE [LARGE SCALE MRNA]</scope>
    <source>
        <tissue>Kidney</tissue>
    </source>
</reference>
<proteinExistence type="evidence at transcript level"/>